<keyword id="KW-0489">Methyltransferase</keyword>
<keyword id="KW-1185">Reference proteome</keyword>
<keyword id="KW-0808">Transferase</keyword>
<evidence type="ECO:0000250" key="1"/>
<evidence type="ECO:0000305" key="2"/>
<gene>
    <name type="ordered locus">SERP0172</name>
</gene>
<reference key="1">
    <citation type="journal article" date="2005" name="J. Bacteriol.">
        <title>Insights on evolution of virulence and resistance from the complete genome analysis of an early methicillin-resistant Staphylococcus aureus strain and a biofilm-producing methicillin-resistant Staphylococcus epidermidis strain.</title>
        <authorList>
            <person name="Gill S.R."/>
            <person name="Fouts D.E."/>
            <person name="Archer G.L."/>
            <person name="Mongodin E.F."/>
            <person name="DeBoy R.T."/>
            <person name="Ravel J."/>
            <person name="Paulsen I.T."/>
            <person name="Kolonay J.F."/>
            <person name="Brinkac L.M."/>
            <person name="Beanan M.J."/>
            <person name="Dodson R.J."/>
            <person name="Daugherty S.C."/>
            <person name="Madupu R."/>
            <person name="Angiuoli S.V."/>
            <person name="Durkin A.S."/>
            <person name="Haft D.H."/>
            <person name="Vamathevan J.J."/>
            <person name="Khouri H."/>
            <person name="Utterback T.R."/>
            <person name="Lee C."/>
            <person name="Dimitrov G."/>
            <person name="Jiang L."/>
            <person name="Qin H."/>
            <person name="Weidman J."/>
            <person name="Tran K."/>
            <person name="Kang K.H."/>
            <person name="Hance I.R."/>
            <person name="Nelson K.E."/>
            <person name="Fraser C.M."/>
        </authorList>
    </citation>
    <scope>NUCLEOTIDE SEQUENCE [LARGE SCALE GENOMIC DNA]</scope>
    <source>
        <strain>ATCC 35984 / DSM 28319 / BCRC 17069 / CCUG 31568 / BM 3577 / RP62A</strain>
    </source>
</reference>
<proteinExistence type="inferred from homology"/>
<accession>Q5HRM1</accession>
<organism>
    <name type="scientific">Staphylococcus epidermidis (strain ATCC 35984 / DSM 28319 / BCRC 17069 / CCUG 31568 / BM 3577 / RP62A)</name>
    <dbReference type="NCBI Taxonomy" id="176279"/>
    <lineage>
        <taxon>Bacteria</taxon>
        <taxon>Bacillati</taxon>
        <taxon>Bacillota</taxon>
        <taxon>Bacilli</taxon>
        <taxon>Bacillales</taxon>
        <taxon>Staphylococcaceae</taxon>
        <taxon>Staphylococcus</taxon>
    </lineage>
</organism>
<name>TRMHL_STAEQ</name>
<protein>
    <recommendedName>
        <fullName>Putative TrmH family tRNA/rRNA methyltransferase</fullName>
        <ecNumber>2.1.1.-</ecNumber>
    </recommendedName>
</protein>
<dbReference type="EC" id="2.1.1.-"/>
<dbReference type="EMBL" id="CP000029">
    <property type="protein sequence ID" value="AAW53563.1"/>
    <property type="molecule type" value="Genomic_DNA"/>
</dbReference>
<dbReference type="SMR" id="Q5HRM1"/>
<dbReference type="STRING" id="176279.SERP0172"/>
<dbReference type="KEGG" id="ser:SERP0172"/>
<dbReference type="eggNOG" id="COG0566">
    <property type="taxonomic scope" value="Bacteria"/>
</dbReference>
<dbReference type="HOGENOM" id="CLU_021322_0_1_9"/>
<dbReference type="Proteomes" id="UP000000531">
    <property type="component" value="Chromosome"/>
</dbReference>
<dbReference type="GO" id="GO:0005829">
    <property type="term" value="C:cytosol"/>
    <property type="evidence" value="ECO:0007669"/>
    <property type="project" value="TreeGrafter"/>
</dbReference>
<dbReference type="GO" id="GO:0003723">
    <property type="term" value="F:RNA binding"/>
    <property type="evidence" value="ECO:0007669"/>
    <property type="project" value="InterPro"/>
</dbReference>
<dbReference type="GO" id="GO:0008173">
    <property type="term" value="F:RNA methyltransferase activity"/>
    <property type="evidence" value="ECO:0007669"/>
    <property type="project" value="InterPro"/>
</dbReference>
<dbReference type="GO" id="GO:0032259">
    <property type="term" value="P:methylation"/>
    <property type="evidence" value="ECO:0007669"/>
    <property type="project" value="UniProtKB-KW"/>
</dbReference>
<dbReference type="GO" id="GO:0006396">
    <property type="term" value="P:RNA processing"/>
    <property type="evidence" value="ECO:0007669"/>
    <property type="project" value="InterPro"/>
</dbReference>
<dbReference type="CDD" id="cd18103">
    <property type="entry name" value="SpoU-like_RlmB"/>
    <property type="match status" value="1"/>
</dbReference>
<dbReference type="FunFam" id="3.40.1280.10:FF:000008">
    <property type="entry name" value="Group 3 RNA methyltransferase TrmH"/>
    <property type="match status" value="1"/>
</dbReference>
<dbReference type="Gene3D" id="3.30.1330.30">
    <property type="match status" value="1"/>
</dbReference>
<dbReference type="Gene3D" id="3.40.1280.10">
    <property type="match status" value="1"/>
</dbReference>
<dbReference type="InterPro" id="IPR029028">
    <property type="entry name" value="Alpha/beta_knot_MTases"/>
</dbReference>
<dbReference type="InterPro" id="IPR029064">
    <property type="entry name" value="Ribosomal_eL30-like_sf"/>
</dbReference>
<dbReference type="InterPro" id="IPR004441">
    <property type="entry name" value="rRNA_MeTrfase_TrmH"/>
</dbReference>
<dbReference type="InterPro" id="IPR001537">
    <property type="entry name" value="SpoU_MeTrfase"/>
</dbReference>
<dbReference type="InterPro" id="IPR013123">
    <property type="entry name" value="SpoU_subst-bd"/>
</dbReference>
<dbReference type="InterPro" id="IPR029026">
    <property type="entry name" value="tRNA_m1G_MTases_N"/>
</dbReference>
<dbReference type="NCBIfam" id="TIGR00186">
    <property type="entry name" value="rRNA_methyl_3"/>
    <property type="match status" value="1"/>
</dbReference>
<dbReference type="PANTHER" id="PTHR46429">
    <property type="entry name" value="23S RRNA (GUANOSINE-2'-O-)-METHYLTRANSFERASE RLMB"/>
    <property type="match status" value="1"/>
</dbReference>
<dbReference type="PANTHER" id="PTHR46429:SF1">
    <property type="entry name" value="23S RRNA (GUANOSINE-2'-O-)-METHYLTRANSFERASE RLMB"/>
    <property type="match status" value="1"/>
</dbReference>
<dbReference type="Pfam" id="PF00588">
    <property type="entry name" value="SpoU_methylase"/>
    <property type="match status" value="1"/>
</dbReference>
<dbReference type="Pfam" id="PF08032">
    <property type="entry name" value="SpoU_sub_bind"/>
    <property type="match status" value="1"/>
</dbReference>
<dbReference type="SMART" id="SM00967">
    <property type="entry name" value="SpoU_sub_bind"/>
    <property type="match status" value="1"/>
</dbReference>
<dbReference type="SUPFAM" id="SSF75217">
    <property type="entry name" value="alpha/beta knot"/>
    <property type="match status" value="1"/>
</dbReference>
<dbReference type="SUPFAM" id="SSF55315">
    <property type="entry name" value="L30e-like"/>
    <property type="match status" value="1"/>
</dbReference>
<sequence length="249" mass="27321">MEDIVIVGRHAVKEAIISGHAINKILIQDGIKKQQINDILKNAKSQKLIVQTVPKSKLDFLANAPHQGVAALVAPYEYANFDEFLQKQKKKARYSTVIILDGLEDPHNLGSILRTADASGVDAVIIPKRRSVALTQTVAKASTGAIQHVPVIRVTNLSKTIDELKDNGFWIAGTEANNATDYRDLQADMSLGIVIGSEGQGMSRLVSDKCDFHIKIPMVGHVNSLNASVAASLMMYEVYRKRHQLEEKS</sequence>
<feature type="chain" id="PRO_0000224832" description="Putative TrmH family tRNA/rRNA methyltransferase">
    <location>
        <begin position="1"/>
        <end position="249"/>
    </location>
</feature>
<feature type="binding site" evidence="1">
    <location>
        <position position="196"/>
    </location>
    <ligand>
        <name>S-adenosyl-L-methionine</name>
        <dbReference type="ChEBI" id="CHEBI:59789"/>
    </ligand>
</feature>
<feature type="binding site" evidence="1">
    <location>
        <position position="216"/>
    </location>
    <ligand>
        <name>S-adenosyl-L-methionine</name>
        <dbReference type="ChEBI" id="CHEBI:59789"/>
    </ligand>
</feature>
<feature type="binding site" evidence="1">
    <location>
        <position position="225"/>
    </location>
    <ligand>
        <name>S-adenosyl-L-methionine</name>
        <dbReference type="ChEBI" id="CHEBI:59789"/>
    </ligand>
</feature>
<comment type="similarity">
    <text evidence="2">Belongs to the class IV-like SAM-binding methyltransferase superfamily. RNA methyltransferase TrmH family.</text>
</comment>